<dbReference type="EC" id="2.6.1.52" evidence="1"/>
<dbReference type="EMBL" id="AM167904">
    <property type="protein sequence ID" value="CAJ48957.1"/>
    <property type="molecule type" value="Genomic_DNA"/>
</dbReference>
<dbReference type="RefSeq" id="WP_012417029.1">
    <property type="nucleotide sequence ID" value="NC_010645.1"/>
</dbReference>
<dbReference type="SMR" id="Q2L2T1"/>
<dbReference type="STRING" id="360910.BAV1348"/>
<dbReference type="GeneID" id="92935526"/>
<dbReference type="KEGG" id="bav:BAV1348"/>
<dbReference type="eggNOG" id="COG1932">
    <property type="taxonomic scope" value="Bacteria"/>
</dbReference>
<dbReference type="HOGENOM" id="CLU_034866_0_2_4"/>
<dbReference type="OrthoDB" id="9809412at2"/>
<dbReference type="UniPathway" id="UPA00135">
    <property type="reaction ID" value="UER00197"/>
</dbReference>
<dbReference type="UniPathway" id="UPA00244">
    <property type="reaction ID" value="UER00311"/>
</dbReference>
<dbReference type="Proteomes" id="UP000001977">
    <property type="component" value="Chromosome"/>
</dbReference>
<dbReference type="GO" id="GO:0005737">
    <property type="term" value="C:cytoplasm"/>
    <property type="evidence" value="ECO:0007669"/>
    <property type="project" value="UniProtKB-SubCell"/>
</dbReference>
<dbReference type="GO" id="GO:0004648">
    <property type="term" value="F:O-phospho-L-serine:2-oxoglutarate aminotransferase activity"/>
    <property type="evidence" value="ECO:0007669"/>
    <property type="project" value="UniProtKB-UniRule"/>
</dbReference>
<dbReference type="GO" id="GO:0030170">
    <property type="term" value="F:pyridoxal phosphate binding"/>
    <property type="evidence" value="ECO:0007669"/>
    <property type="project" value="UniProtKB-UniRule"/>
</dbReference>
<dbReference type="GO" id="GO:0006564">
    <property type="term" value="P:L-serine biosynthetic process"/>
    <property type="evidence" value="ECO:0007669"/>
    <property type="project" value="UniProtKB-UniRule"/>
</dbReference>
<dbReference type="GO" id="GO:0008615">
    <property type="term" value="P:pyridoxine biosynthetic process"/>
    <property type="evidence" value="ECO:0007669"/>
    <property type="project" value="UniProtKB-UniRule"/>
</dbReference>
<dbReference type="FunFam" id="3.40.640.10:FF:000010">
    <property type="entry name" value="Phosphoserine aminotransferase"/>
    <property type="match status" value="1"/>
</dbReference>
<dbReference type="FunFam" id="3.90.1150.10:FF:000006">
    <property type="entry name" value="Phosphoserine aminotransferase"/>
    <property type="match status" value="1"/>
</dbReference>
<dbReference type="Gene3D" id="3.90.1150.10">
    <property type="entry name" value="Aspartate Aminotransferase, domain 1"/>
    <property type="match status" value="1"/>
</dbReference>
<dbReference type="Gene3D" id="3.40.640.10">
    <property type="entry name" value="Type I PLP-dependent aspartate aminotransferase-like (Major domain)"/>
    <property type="match status" value="1"/>
</dbReference>
<dbReference type="HAMAP" id="MF_00160">
    <property type="entry name" value="SerC_aminotrans_5"/>
    <property type="match status" value="1"/>
</dbReference>
<dbReference type="InterPro" id="IPR000192">
    <property type="entry name" value="Aminotrans_V_dom"/>
</dbReference>
<dbReference type="InterPro" id="IPR020578">
    <property type="entry name" value="Aminotrans_V_PyrdxlP_BS"/>
</dbReference>
<dbReference type="InterPro" id="IPR022278">
    <property type="entry name" value="Pser_aminoTfrase"/>
</dbReference>
<dbReference type="InterPro" id="IPR015424">
    <property type="entry name" value="PyrdxlP-dep_Trfase"/>
</dbReference>
<dbReference type="InterPro" id="IPR015421">
    <property type="entry name" value="PyrdxlP-dep_Trfase_major"/>
</dbReference>
<dbReference type="InterPro" id="IPR015422">
    <property type="entry name" value="PyrdxlP-dep_Trfase_small"/>
</dbReference>
<dbReference type="NCBIfam" id="NF003764">
    <property type="entry name" value="PRK05355.1"/>
    <property type="match status" value="1"/>
</dbReference>
<dbReference type="NCBIfam" id="TIGR01364">
    <property type="entry name" value="serC_1"/>
    <property type="match status" value="1"/>
</dbReference>
<dbReference type="PANTHER" id="PTHR43247">
    <property type="entry name" value="PHOSPHOSERINE AMINOTRANSFERASE"/>
    <property type="match status" value="1"/>
</dbReference>
<dbReference type="PANTHER" id="PTHR43247:SF1">
    <property type="entry name" value="PHOSPHOSERINE AMINOTRANSFERASE"/>
    <property type="match status" value="1"/>
</dbReference>
<dbReference type="Pfam" id="PF00266">
    <property type="entry name" value="Aminotran_5"/>
    <property type="match status" value="1"/>
</dbReference>
<dbReference type="PIRSF" id="PIRSF000525">
    <property type="entry name" value="SerC"/>
    <property type="match status" value="1"/>
</dbReference>
<dbReference type="SUPFAM" id="SSF53383">
    <property type="entry name" value="PLP-dependent transferases"/>
    <property type="match status" value="1"/>
</dbReference>
<dbReference type="PROSITE" id="PS00595">
    <property type="entry name" value="AA_TRANSFER_CLASS_5"/>
    <property type="match status" value="1"/>
</dbReference>
<organism>
    <name type="scientific">Bordetella avium (strain 197N)</name>
    <dbReference type="NCBI Taxonomy" id="360910"/>
    <lineage>
        <taxon>Bacteria</taxon>
        <taxon>Pseudomonadati</taxon>
        <taxon>Pseudomonadota</taxon>
        <taxon>Betaproteobacteria</taxon>
        <taxon>Burkholderiales</taxon>
        <taxon>Alcaligenaceae</taxon>
        <taxon>Bordetella</taxon>
    </lineage>
</organism>
<evidence type="ECO:0000255" key="1">
    <source>
        <dbReference type="HAMAP-Rule" id="MF_00160"/>
    </source>
</evidence>
<comment type="function">
    <text evidence="1">Catalyzes the reversible conversion of 3-phosphohydroxypyruvate to phosphoserine and of 3-hydroxy-2-oxo-4-phosphonooxybutanoate to phosphohydroxythreonine.</text>
</comment>
<comment type="catalytic activity">
    <reaction evidence="1">
        <text>O-phospho-L-serine + 2-oxoglutarate = 3-phosphooxypyruvate + L-glutamate</text>
        <dbReference type="Rhea" id="RHEA:14329"/>
        <dbReference type="ChEBI" id="CHEBI:16810"/>
        <dbReference type="ChEBI" id="CHEBI:18110"/>
        <dbReference type="ChEBI" id="CHEBI:29985"/>
        <dbReference type="ChEBI" id="CHEBI:57524"/>
        <dbReference type="EC" id="2.6.1.52"/>
    </reaction>
</comment>
<comment type="catalytic activity">
    <reaction evidence="1">
        <text>4-(phosphooxy)-L-threonine + 2-oxoglutarate = (R)-3-hydroxy-2-oxo-4-phosphooxybutanoate + L-glutamate</text>
        <dbReference type="Rhea" id="RHEA:16573"/>
        <dbReference type="ChEBI" id="CHEBI:16810"/>
        <dbReference type="ChEBI" id="CHEBI:29985"/>
        <dbReference type="ChEBI" id="CHEBI:58452"/>
        <dbReference type="ChEBI" id="CHEBI:58538"/>
        <dbReference type="EC" id="2.6.1.52"/>
    </reaction>
</comment>
<comment type="cofactor">
    <cofactor evidence="1">
        <name>pyridoxal 5'-phosphate</name>
        <dbReference type="ChEBI" id="CHEBI:597326"/>
    </cofactor>
    <text evidence="1">Binds 1 pyridoxal phosphate per subunit.</text>
</comment>
<comment type="pathway">
    <text evidence="1">Amino-acid biosynthesis; L-serine biosynthesis; L-serine from 3-phospho-D-glycerate: step 2/3.</text>
</comment>
<comment type="pathway">
    <text evidence="1">Cofactor biosynthesis; pyridoxine 5'-phosphate biosynthesis; pyridoxine 5'-phosphate from D-erythrose 4-phosphate: step 3/5.</text>
</comment>
<comment type="subunit">
    <text evidence="1">Homodimer.</text>
</comment>
<comment type="subcellular location">
    <subcellularLocation>
        <location evidence="1">Cytoplasm</location>
    </subcellularLocation>
</comment>
<comment type="similarity">
    <text evidence="1">Belongs to the class-V pyridoxal-phosphate-dependent aminotransferase family. SerC subfamily.</text>
</comment>
<proteinExistence type="inferred from homology"/>
<name>SERC_BORA1</name>
<feature type="chain" id="PRO_1000058201" description="Phosphoserine aminotransferase">
    <location>
        <begin position="1"/>
        <end position="376"/>
    </location>
</feature>
<feature type="binding site" evidence="1">
    <location>
        <position position="42"/>
    </location>
    <ligand>
        <name>L-glutamate</name>
        <dbReference type="ChEBI" id="CHEBI:29985"/>
    </ligand>
</feature>
<feature type="binding site" evidence="1">
    <location>
        <position position="104"/>
    </location>
    <ligand>
        <name>pyridoxal 5'-phosphate</name>
        <dbReference type="ChEBI" id="CHEBI:597326"/>
    </ligand>
</feature>
<feature type="binding site" evidence="1">
    <location>
        <position position="163"/>
    </location>
    <ligand>
        <name>pyridoxal 5'-phosphate</name>
        <dbReference type="ChEBI" id="CHEBI:597326"/>
    </ligand>
</feature>
<feature type="binding site" evidence="1">
    <location>
        <position position="188"/>
    </location>
    <ligand>
        <name>pyridoxal 5'-phosphate</name>
        <dbReference type="ChEBI" id="CHEBI:597326"/>
    </ligand>
</feature>
<feature type="binding site" evidence="1">
    <location>
        <position position="211"/>
    </location>
    <ligand>
        <name>pyridoxal 5'-phosphate</name>
        <dbReference type="ChEBI" id="CHEBI:597326"/>
    </ligand>
</feature>
<feature type="binding site" evidence="1">
    <location>
        <begin position="253"/>
        <end position="254"/>
    </location>
    <ligand>
        <name>pyridoxal 5'-phosphate</name>
        <dbReference type="ChEBI" id="CHEBI:597326"/>
    </ligand>
</feature>
<feature type="modified residue" description="N6-(pyridoxal phosphate)lysine" evidence="1">
    <location>
        <position position="212"/>
    </location>
</feature>
<protein>
    <recommendedName>
        <fullName evidence="1">Phosphoserine aminotransferase</fullName>
        <ecNumber evidence="1">2.6.1.52</ecNumber>
    </recommendedName>
    <alternativeName>
        <fullName evidence="1">Phosphohydroxythreonine aminotransferase</fullName>
        <shortName evidence="1">PSAT</shortName>
    </alternativeName>
</protein>
<keyword id="KW-0028">Amino-acid biosynthesis</keyword>
<keyword id="KW-0032">Aminotransferase</keyword>
<keyword id="KW-0963">Cytoplasm</keyword>
<keyword id="KW-0663">Pyridoxal phosphate</keyword>
<keyword id="KW-0664">Pyridoxine biosynthesis</keyword>
<keyword id="KW-1185">Reference proteome</keyword>
<keyword id="KW-0718">Serine biosynthesis</keyword>
<keyword id="KW-0808">Transferase</keyword>
<accession>Q2L2T1</accession>
<reference key="1">
    <citation type="journal article" date="2006" name="J. Bacteriol.">
        <title>Comparison of the genome sequence of the poultry pathogen Bordetella avium with those of B. bronchiseptica, B. pertussis, and B. parapertussis reveals extensive diversity in surface structures associated with host interaction.</title>
        <authorList>
            <person name="Sebaihia M."/>
            <person name="Preston A."/>
            <person name="Maskell D.J."/>
            <person name="Kuzmiak H."/>
            <person name="Connell T.D."/>
            <person name="King N.D."/>
            <person name="Orndorff P.E."/>
            <person name="Miyamoto D.M."/>
            <person name="Thomson N.R."/>
            <person name="Harris D."/>
            <person name="Goble A."/>
            <person name="Lord A."/>
            <person name="Murphy L."/>
            <person name="Quail M.A."/>
            <person name="Rutter S."/>
            <person name="Squares R."/>
            <person name="Squares S."/>
            <person name="Woodward J."/>
            <person name="Parkhill J."/>
            <person name="Temple L.M."/>
        </authorList>
    </citation>
    <scope>NUCLEOTIDE SEQUENCE [LARGE SCALE GENOMIC DNA]</scope>
    <source>
        <strain>197N</strain>
    </source>
</reference>
<sequence length="376" mass="40575">MARPWNFSAGPSALPESVLQQAAAEMLDWHGSGMSVMEMSHRGRQFVQICDEAEADLRELMNVPADYAIMFMQGGGLGENAIVPMNLIGRRGLPAADFVVTGHWSTRSHKEAGRYGDAQIAASSAQAVNIDGHEQRPFTWVPPLSDWRVRPEAAYLHLCSNETIGGVEFTEWPDLAAFGAPDVPLVVDASSHFLSRPLDVTRTGLLFAGAQKNAGPAGVTVVIARRDLLGKALSICPSAFDYANVAAEHSRYNTPPTFAIYVAGLVYKWVKAQGGVQGLEAANKAKADLLYGYLDASGFYRNPVHPAVRSRMNVPFVLHDESLNDAFLKGAEAAGLLALKGHKSVGGMRASIYNAMPLAGVQALVDYLKEFERLHG</sequence>
<gene>
    <name evidence="1" type="primary">serC</name>
    <name type="ordered locus">BAV1348</name>
</gene>